<feature type="chain" id="PRO_1000018003" description="Arginine--tRNA ligase">
    <location>
        <begin position="1"/>
        <end position="594"/>
    </location>
</feature>
<feature type="short sequence motif" description="'HIGH' region">
    <location>
        <begin position="139"/>
        <end position="149"/>
    </location>
</feature>
<dbReference type="EC" id="6.1.1.19" evidence="1"/>
<dbReference type="EMBL" id="CP000572">
    <property type="protein sequence ID" value="ABN89768.1"/>
    <property type="molecule type" value="Genomic_DNA"/>
</dbReference>
<dbReference type="RefSeq" id="WP_004522947.1">
    <property type="nucleotide sequence ID" value="NC_009076.1"/>
</dbReference>
<dbReference type="SMR" id="A3NQU2"/>
<dbReference type="KEGG" id="bpl:BURPS1106A_0430"/>
<dbReference type="HOGENOM" id="CLU_006406_0_1_4"/>
<dbReference type="Proteomes" id="UP000006738">
    <property type="component" value="Chromosome I"/>
</dbReference>
<dbReference type="GO" id="GO:0005737">
    <property type="term" value="C:cytoplasm"/>
    <property type="evidence" value="ECO:0007669"/>
    <property type="project" value="UniProtKB-SubCell"/>
</dbReference>
<dbReference type="GO" id="GO:0004814">
    <property type="term" value="F:arginine-tRNA ligase activity"/>
    <property type="evidence" value="ECO:0007669"/>
    <property type="project" value="UniProtKB-UniRule"/>
</dbReference>
<dbReference type="GO" id="GO:0005524">
    <property type="term" value="F:ATP binding"/>
    <property type="evidence" value="ECO:0007669"/>
    <property type="project" value="UniProtKB-UniRule"/>
</dbReference>
<dbReference type="GO" id="GO:0006420">
    <property type="term" value="P:arginyl-tRNA aminoacylation"/>
    <property type="evidence" value="ECO:0007669"/>
    <property type="project" value="UniProtKB-UniRule"/>
</dbReference>
<dbReference type="CDD" id="cd07956">
    <property type="entry name" value="Anticodon_Ia_Arg"/>
    <property type="match status" value="1"/>
</dbReference>
<dbReference type="CDD" id="cd00671">
    <property type="entry name" value="ArgRS_core"/>
    <property type="match status" value="1"/>
</dbReference>
<dbReference type="FunFam" id="1.10.730.10:FF:000008">
    <property type="entry name" value="Arginine--tRNA ligase"/>
    <property type="match status" value="1"/>
</dbReference>
<dbReference type="FunFam" id="3.40.50.620:FF:000062">
    <property type="entry name" value="Arginine--tRNA ligase"/>
    <property type="match status" value="1"/>
</dbReference>
<dbReference type="Gene3D" id="3.30.1360.70">
    <property type="entry name" value="Arginyl tRNA synthetase N-terminal domain"/>
    <property type="match status" value="1"/>
</dbReference>
<dbReference type="Gene3D" id="3.40.50.620">
    <property type="entry name" value="HUPs"/>
    <property type="match status" value="1"/>
</dbReference>
<dbReference type="Gene3D" id="1.10.730.10">
    <property type="entry name" value="Isoleucyl-tRNA Synthetase, Domain 1"/>
    <property type="match status" value="1"/>
</dbReference>
<dbReference type="HAMAP" id="MF_00123">
    <property type="entry name" value="Arg_tRNA_synth"/>
    <property type="match status" value="1"/>
</dbReference>
<dbReference type="InterPro" id="IPR001412">
    <property type="entry name" value="aa-tRNA-synth_I_CS"/>
</dbReference>
<dbReference type="InterPro" id="IPR001278">
    <property type="entry name" value="Arg-tRNA-ligase"/>
</dbReference>
<dbReference type="InterPro" id="IPR005148">
    <property type="entry name" value="Arg-tRNA-synth_N"/>
</dbReference>
<dbReference type="InterPro" id="IPR036695">
    <property type="entry name" value="Arg-tRNA-synth_N_sf"/>
</dbReference>
<dbReference type="InterPro" id="IPR035684">
    <property type="entry name" value="ArgRS_core"/>
</dbReference>
<dbReference type="InterPro" id="IPR008909">
    <property type="entry name" value="DALR_anticod-bd"/>
</dbReference>
<dbReference type="InterPro" id="IPR014729">
    <property type="entry name" value="Rossmann-like_a/b/a_fold"/>
</dbReference>
<dbReference type="InterPro" id="IPR009080">
    <property type="entry name" value="tRNAsynth_Ia_anticodon-bd"/>
</dbReference>
<dbReference type="NCBIfam" id="TIGR00456">
    <property type="entry name" value="argS"/>
    <property type="match status" value="1"/>
</dbReference>
<dbReference type="PANTHER" id="PTHR11956:SF5">
    <property type="entry name" value="ARGININE--TRNA LIGASE, CYTOPLASMIC"/>
    <property type="match status" value="1"/>
</dbReference>
<dbReference type="PANTHER" id="PTHR11956">
    <property type="entry name" value="ARGINYL-TRNA SYNTHETASE"/>
    <property type="match status" value="1"/>
</dbReference>
<dbReference type="Pfam" id="PF03485">
    <property type="entry name" value="Arg_tRNA_synt_N"/>
    <property type="match status" value="1"/>
</dbReference>
<dbReference type="Pfam" id="PF05746">
    <property type="entry name" value="DALR_1"/>
    <property type="match status" value="1"/>
</dbReference>
<dbReference type="Pfam" id="PF00750">
    <property type="entry name" value="tRNA-synt_1d"/>
    <property type="match status" value="1"/>
</dbReference>
<dbReference type="PRINTS" id="PR01038">
    <property type="entry name" value="TRNASYNTHARG"/>
</dbReference>
<dbReference type="SMART" id="SM01016">
    <property type="entry name" value="Arg_tRNA_synt_N"/>
    <property type="match status" value="1"/>
</dbReference>
<dbReference type="SMART" id="SM00836">
    <property type="entry name" value="DALR_1"/>
    <property type="match status" value="1"/>
</dbReference>
<dbReference type="SUPFAM" id="SSF47323">
    <property type="entry name" value="Anticodon-binding domain of a subclass of class I aminoacyl-tRNA synthetases"/>
    <property type="match status" value="1"/>
</dbReference>
<dbReference type="SUPFAM" id="SSF55190">
    <property type="entry name" value="Arginyl-tRNA synthetase (ArgRS), N-terminal 'additional' domain"/>
    <property type="match status" value="1"/>
</dbReference>
<dbReference type="SUPFAM" id="SSF52374">
    <property type="entry name" value="Nucleotidylyl transferase"/>
    <property type="match status" value="1"/>
</dbReference>
<dbReference type="PROSITE" id="PS00178">
    <property type="entry name" value="AA_TRNA_LIGASE_I"/>
    <property type="match status" value="1"/>
</dbReference>
<gene>
    <name evidence="1" type="primary">argS</name>
    <name type="ordered locus">BURPS1106A_0430</name>
</gene>
<evidence type="ECO:0000255" key="1">
    <source>
        <dbReference type="HAMAP-Rule" id="MF_00123"/>
    </source>
</evidence>
<organism>
    <name type="scientific">Burkholderia pseudomallei (strain 1106a)</name>
    <dbReference type="NCBI Taxonomy" id="357348"/>
    <lineage>
        <taxon>Bacteria</taxon>
        <taxon>Pseudomonadati</taxon>
        <taxon>Pseudomonadota</taxon>
        <taxon>Betaproteobacteria</taxon>
        <taxon>Burkholderiales</taxon>
        <taxon>Burkholderiaceae</taxon>
        <taxon>Burkholderia</taxon>
        <taxon>pseudomallei group</taxon>
    </lineage>
</organism>
<name>SYR_BURP0</name>
<sequence length="594" mass="64520">MLPAQKHTLETLLENSVKQVVQASKGDADAAFVLPAIALERPKVAAHGDVACNVALQLAKPLGANPRQLAEQIVAALTAQPEAAGLVDAAEIAGPGFINLRLTPASKQAVIGAVLAQGRAFGASERDHGKRVLLEFVSANPTGPLHVGHGRQAALGDALANVLASQGYAVHREFYYNDAGVQIGNLAISTQARARGLKPGDAGWPEAAYNGEYIADIARDYLNGETVAASDGEPVTGKRDVEDLEAIRKFAVTYLRREQDMDLKAFGVKFDQYYLESSLYTEGRVEKTVDALIAAGMTYEQEGALWLRTTDEGDDKDRVMRKTDGTYTYFVPDVAYHVTKWERGFTKVINIQGSDHHGTIARVRAGLQGLHIGIPKGYPDYVLHKMVTVMRDGQEVKISKRAGSYVTVRDLIEWSGGATPGSEGSPELLDEATITRGRDAVRFFLISRKADTEFVFDIDLALKQNDENPVYYVQYAHARICSVINEWKSRYGATDALLPGADLSPLDSKQAMALMQKLAEYPDVLAHAAGELAPHAVAFYLRELASEFHSFYNAERVLVDEQAPRTARVALLAATRQVLENGLAMLGVSAPSKM</sequence>
<protein>
    <recommendedName>
        <fullName evidence="1">Arginine--tRNA ligase</fullName>
        <ecNumber evidence="1">6.1.1.19</ecNumber>
    </recommendedName>
    <alternativeName>
        <fullName evidence="1">Arginyl-tRNA synthetase</fullName>
        <shortName evidence="1">ArgRS</shortName>
    </alternativeName>
</protein>
<keyword id="KW-0030">Aminoacyl-tRNA synthetase</keyword>
<keyword id="KW-0067">ATP-binding</keyword>
<keyword id="KW-0963">Cytoplasm</keyword>
<keyword id="KW-0436">Ligase</keyword>
<keyword id="KW-0547">Nucleotide-binding</keyword>
<keyword id="KW-0648">Protein biosynthesis</keyword>
<comment type="catalytic activity">
    <reaction evidence="1">
        <text>tRNA(Arg) + L-arginine + ATP = L-arginyl-tRNA(Arg) + AMP + diphosphate</text>
        <dbReference type="Rhea" id="RHEA:20301"/>
        <dbReference type="Rhea" id="RHEA-COMP:9658"/>
        <dbReference type="Rhea" id="RHEA-COMP:9673"/>
        <dbReference type="ChEBI" id="CHEBI:30616"/>
        <dbReference type="ChEBI" id="CHEBI:32682"/>
        <dbReference type="ChEBI" id="CHEBI:33019"/>
        <dbReference type="ChEBI" id="CHEBI:78442"/>
        <dbReference type="ChEBI" id="CHEBI:78513"/>
        <dbReference type="ChEBI" id="CHEBI:456215"/>
        <dbReference type="EC" id="6.1.1.19"/>
    </reaction>
</comment>
<comment type="subunit">
    <text evidence="1">Monomer.</text>
</comment>
<comment type="subcellular location">
    <subcellularLocation>
        <location evidence="1">Cytoplasm</location>
    </subcellularLocation>
</comment>
<comment type="similarity">
    <text evidence="1">Belongs to the class-I aminoacyl-tRNA synthetase family.</text>
</comment>
<accession>A3NQU2</accession>
<reference key="1">
    <citation type="journal article" date="2010" name="Genome Biol. Evol.">
        <title>Continuing evolution of Burkholderia mallei through genome reduction and large-scale rearrangements.</title>
        <authorList>
            <person name="Losada L."/>
            <person name="Ronning C.M."/>
            <person name="DeShazer D."/>
            <person name="Woods D."/>
            <person name="Fedorova N."/>
            <person name="Kim H.S."/>
            <person name="Shabalina S.A."/>
            <person name="Pearson T.R."/>
            <person name="Brinkac L."/>
            <person name="Tan P."/>
            <person name="Nandi T."/>
            <person name="Crabtree J."/>
            <person name="Badger J."/>
            <person name="Beckstrom-Sternberg S."/>
            <person name="Saqib M."/>
            <person name="Schutzer S.E."/>
            <person name="Keim P."/>
            <person name="Nierman W.C."/>
        </authorList>
    </citation>
    <scope>NUCLEOTIDE SEQUENCE [LARGE SCALE GENOMIC DNA]</scope>
    <source>
        <strain>1106a</strain>
    </source>
</reference>
<proteinExistence type="inferred from homology"/>